<accession>Q0VT60</accession>
<proteinExistence type="inferred from homology"/>
<protein>
    <recommendedName>
        <fullName evidence="1">Deoxyuridine 5'-triphosphate nucleotidohydrolase</fullName>
        <shortName evidence="1">dUTPase</shortName>
        <ecNumber evidence="1">3.6.1.23</ecNumber>
    </recommendedName>
    <alternativeName>
        <fullName evidence="1">dUTP pyrophosphatase</fullName>
    </alternativeName>
</protein>
<evidence type="ECO:0000255" key="1">
    <source>
        <dbReference type="HAMAP-Rule" id="MF_00116"/>
    </source>
</evidence>
<organism>
    <name type="scientific">Alcanivorax borkumensis (strain ATCC 700651 / DSM 11573 / NCIMB 13689 / SK2)</name>
    <dbReference type="NCBI Taxonomy" id="393595"/>
    <lineage>
        <taxon>Bacteria</taxon>
        <taxon>Pseudomonadati</taxon>
        <taxon>Pseudomonadota</taxon>
        <taxon>Gammaproteobacteria</taxon>
        <taxon>Oceanospirillales</taxon>
        <taxon>Alcanivoracaceae</taxon>
        <taxon>Alcanivorax</taxon>
    </lineage>
</organism>
<gene>
    <name evidence="1" type="primary">dut</name>
    <name type="ordered locus">ABO_0212</name>
</gene>
<sequence length="150" mass="16302">MRLQYRVLDTRLGDSIPLPHYATDGSAGLDLRAMVKEPLTLQPGDTELLPTGMSIFIDDPGYAGMILPRSGLGHKHGIVLGNLVGLIDSDYQGELMVSCWNRGQQPFTLEPGERVAQLVIVPVMQVELKQVESFSASKRGEGGFGHSGRQ</sequence>
<name>DUT_ALCBS</name>
<comment type="function">
    <text evidence="1">This enzyme is involved in nucleotide metabolism: it produces dUMP, the immediate precursor of thymidine nucleotides and it decreases the intracellular concentration of dUTP so that uracil cannot be incorporated into DNA.</text>
</comment>
<comment type="catalytic activity">
    <reaction evidence="1">
        <text>dUTP + H2O = dUMP + diphosphate + H(+)</text>
        <dbReference type="Rhea" id="RHEA:10248"/>
        <dbReference type="ChEBI" id="CHEBI:15377"/>
        <dbReference type="ChEBI" id="CHEBI:15378"/>
        <dbReference type="ChEBI" id="CHEBI:33019"/>
        <dbReference type="ChEBI" id="CHEBI:61555"/>
        <dbReference type="ChEBI" id="CHEBI:246422"/>
        <dbReference type="EC" id="3.6.1.23"/>
    </reaction>
</comment>
<comment type="cofactor">
    <cofactor evidence="1">
        <name>Mg(2+)</name>
        <dbReference type="ChEBI" id="CHEBI:18420"/>
    </cofactor>
</comment>
<comment type="pathway">
    <text evidence="1">Pyrimidine metabolism; dUMP biosynthesis; dUMP from dCTP (dUTP route): step 2/2.</text>
</comment>
<comment type="similarity">
    <text evidence="1">Belongs to the dUTPase family.</text>
</comment>
<feature type="chain" id="PRO_1000015440" description="Deoxyuridine 5'-triphosphate nucleotidohydrolase">
    <location>
        <begin position="1"/>
        <end position="150"/>
    </location>
</feature>
<feature type="binding site" evidence="1">
    <location>
        <begin position="69"/>
        <end position="71"/>
    </location>
    <ligand>
        <name>substrate</name>
    </ligand>
</feature>
<feature type="binding site" evidence="1">
    <location>
        <position position="82"/>
    </location>
    <ligand>
        <name>substrate</name>
    </ligand>
</feature>
<feature type="binding site" evidence="1">
    <location>
        <begin position="86"/>
        <end position="88"/>
    </location>
    <ligand>
        <name>substrate</name>
    </ligand>
</feature>
<feature type="binding site" evidence="1">
    <location>
        <position position="96"/>
    </location>
    <ligand>
        <name>substrate</name>
    </ligand>
</feature>
<reference key="1">
    <citation type="journal article" date="2006" name="Nat. Biotechnol.">
        <title>Genome sequence of the ubiquitous hydrocarbon-degrading marine bacterium Alcanivorax borkumensis.</title>
        <authorList>
            <person name="Schneiker S."/>
            <person name="Martins dos Santos V.A.P."/>
            <person name="Bartels D."/>
            <person name="Bekel T."/>
            <person name="Brecht M."/>
            <person name="Buhrmester J."/>
            <person name="Chernikova T.N."/>
            <person name="Denaro R."/>
            <person name="Ferrer M."/>
            <person name="Gertler C."/>
            <person name="Goesmann A."/>
            <person name="Golyshina O.V."/>
            <person name="Kaminski F."/>
            <person name="Khachane A.N."/>
            <person name="Lang S."/>
            <person name="Linke B."/>
            <person name="McHardy A.C."/>
            <person name="Meyer F."/>
            <person name="Nechitaylo T."/>
            <person name="Puehler A."/>
            <person name="Regenhardt D."/>
            <person name="Rupp O."/>
            <person name="Sabirova J.S."/>
            <person name="Selbitschka W."/>
            <person name="Yakimov M.M."/>
            <person name="Timmis K.N."/>
            <person name="Vorhoelter F.-J."/>
            <person name="Weidner S."/>
            <person name="Kaiser O."/>
            <person name="Golyshin P.N."/>
        </authorList>
    </citation>
    <scope>NUCLEOTIDE SEQUENCE [LARGE SCALE GENOMIC DNA]</scope>
    <source>
        <strain>ATCC 700651 / DSM 11573 / NCIMB 13689 / SK2</strain>
    </source>
</reference>
<keyword id="KW-0378">Hydrolase</keyword>
<keyword id="KW-0460">Magnesium</keyword>
<keyword id="KW-0479">Metal-binding</keyword>
<keyword id="KW-0546">Nucleotide metabolism</keyword>
<keyword id="KW-1185">Reference proteome</keyword>
<dbReference type="EC" id="3.6.1.23" evidence="1"/>
<dbReference type="EMBL" id="AM286690">
    <property type="protein sequence ID" value="CAL15660.1"/>
    <property type="molecule type" value="Genomic_DNA"/>
</dbReference>
<dbReference type="RefSeq" id="WP_011587509.1">
    <property type="nucleotide sequence ID" value="NC_008260.1"/>
</dbReference>
<dbReference type="SMR" id="Q0VT60"/>
<dbReference type="STRING" id="393595.ABO_0212"/>
<dbReference type="KEGG" id="abo:ABO_0212"/>
<dbReference type="eggNOG" id="COG0756">
    <property type="taxonomic scope" value="Bacteria"/>
</dbReference>
<dbReference type="HOGENOM" id="CLU_068508_1_1_6"/>
<dbReference type="OrthoDB" id="9809956at2"/>
<dbReference type="UniPathway" id="UPA00610">
    <property type="reaction ID" value="UER00666"/>
</dbReference>
<dbReference type="Proteomes" id="UP000008871">
    <property type="component" value="Chromosome"/>
</dbReference>
<dbReference type="GO" id="GO:0004170">
    <property type="term" value="F:dUTP diphosphatase activity"/>
    <property type="evidence" value="ECO:0007669"/>
    <property type="project" value="UniProtKB-UniRule"/>
</dbReference>
<dbReference type="GO" id="GO:0000287">
    <property type="term" value="F:magnesium ion binding"/>
    <property type="evidence" value="ECO:0007669"/>
    <property type="project" value="UniProtKB-UniRule"/>
</dbReference>
<dbReference type="GO" id="GO:0006226">
    <property type="term" value="P:dUMP biosynthetic process"/>
    <property type="evidence" value="ECO:0007669"/>
    <property type="project" value="UniProtKB-UniRule"/>
</dbReference>
<dbReference type="GO" id="GO:0046081">
    <property type="term" value="P:dUTP catabolic process"/>
    <property type="evidence" value="ECO:0007669"/>
    <property type="project" value="InterPro"/>
</dbReference>
<dbReference type="CDD" id="cd07557">
    <property type="entry name" value="trimeric_dUTPase"/>
    <property type="match status" value="1"/>
</dbReference>
<dbReference type="FunFam" id="2.70.40.10:FF:000002">
    <property type="entry name" value="dUTP diphosphatase"/>
    <property type="match status" value="1"/>
</dbReference>
<dbReference type="Gene3D" id="2.70.40.10">
    <property type="match status" value="1"/>
</dbReference>
<dbReference type="HAMAP" id="MF_00116">
    <property type="entry name" value="dUTPase_bact"/>
    <property type="match status" value="1"/>
</dbReference>
<dbReference type="InterPro" id="IPR008181">
    <property type="entry name" value="dUTPase"/>
</dbReference>
<dbReference type="InterPro" id="IPR029054">
    <property type="entry name" value="dUTPase-like"/>
</dbReference>
<dbReference type="InterPro" id="IPR036157">
    <property type="entry name" value="dUTPase-like_sf"/>
</dbReference>
<dbReference type="InterPro" id="IPR033704">
    <property type="entry name" value="dUTPase_trimeric"/>
</dbReference>
<dbReference type="NCBIfam" id="TIGR00576">
    <property type="entry name" value="dut"/>
    <property type="match status" value="1"/>
</dbReference>
<dbReference type="NCBIfam" id="NF001862">
    <property type="entry name" value="PRK00601.1"/>
    <property type="match status" value="1"/>
</dbReference>
<dbReference type="PANTHER" id="PTHR11241">
    <property type="entry name" value="DEOXYURIDINE 5'-TRIPHOSPHATE NUCLEOTIDOHYDROLASE"/>
    <property type="match status" value="1"/>
</dbReference>
<dbReference type="PANTHER" id="PTHR11241:SF0">
    <property type="entry name" value="DEOXYURIDINE 5'-TRIPHOSPHATE NUCLEOTIDOHYDROLASE"/>
    <property type="match status" value="1"/>
</dbReference>
<dbReference type="Pfam" id="PF00692">
    <property type="entry name" value="dUTPase"/>
    <property type="match status" value="1"/>
</dbReference>
<dbReference type="SUPFAM" id="SSF51283">
    <property type="entry name" value="dUTPase-like"/>
    <property type="match status" value="1"/>
</dbReference>